<proteinExistence type="evidence at transcript level"/>
<gene>
    <name type="primary">LIP4</name>
    <name type="ordered locus">At1g56670</name>
    <name type="ORF">F25P12.90</name>
</gene>
<evidence type="ECO:0000250" key="1"/>
<evidence type="ECO:0000255" key="2"/>
<evidence type="ECO:0000305" key="3"/>
<keyword id="KW-0325">Glycoprotein</keyword>
<keyword id="KW-0378">Hydrolase</keyword>
<keyword id="KW-0442">Lipid degradation</keyword>
<keyword id="KW-0443">Lipid metabolism</keyword>
<keyword id="KW-1185">Reference proteome</keyword>
<keyword id="KW-0964">Secreted</keyword>
<keyword id="KW-0732">Signal</keyword>
<comment type="subcellular location">
    <subcellularLocation>
        <location evidence="3">Secreted</location>
    </subcellularLocation>
</comment>
<comment type="similarity">
    <text evidence="3">Belongs to the 'GDSL' lipolytic enzyme family.</text>
</comment>
<name>LIP4_ARATH</name>
<organism>
    <name type="scientific">Arabidopsis thaliana</name>
    <name type="common">Mouse-ear cress</name>
    <dbReference type="NCBI Taxonomy" id="3702"/>
    <lineage>
        <taxon>Eukaryota</taxon>
        <taxon>Viridiplantae</taxon>
        <taxon>Streptophyta</taxon>
        <taxon>Embryophyta</taxon>
        <taxon>Tracheophyta</taxon>
        <taxon>Spermatophyta</taxon>
        <taxon>Magnoliopsida</taxon>
        <taxon>eudicotyledons</taxon>
        <taxon>Gunneridae</taxon>
        <taxon>Pentapetalae</taxon>
        <taxon>rosids</taxon>
        <taxon>malvids</taxon>
        <taxon>Brassicales</taxon>
        <taxon>Brassicaceae</taxon>
        <taxon>Camelineae</taxon>
        <taxon>Arabidopsis</taxon>
    </lineage>
</organism>
<protein>
    <recommendedName>
        <fullName>GDSL esterase/lipase LIP-4</fullName>
        <ecNumber>3.1.1.-</ecNumber>
    </recommendedName>
    <alternativeName>
        <fullName>Extracellular lipase LIP-4</fullName>
    </alternativeName>
</protein>
<feature type="signal peptide" evidence="2">
    <location>
        <begin position="1"/>
        <end position="32"/>
    </location>
</feature>
<feature type="chain" id="PRO_0000367341" description="GDSL esterase/lipase LIP-4">
    <location>
        <begin position="33"/>
        <end position="373"/>
    </location>
</feature>
<feature type="active site" description="Nucleophile" evidence="1">
    <location>
        <position position="47"/>
    </location>
</feature>
<feature type="active site" evidence="1">
    <location>
        <position position="339"/>
    </location>
</feature>
<feature type="active site" evidence="1">
    <location>
        <position position="342"/>
    </location>
</feature>
<feature type="glycosylation site" description="N-linked (GlcNAc...) asparagine" evidence="2">
    <location>
        <position position="93"/>
    </location>
</feature>
<feature type="sequence conflict" description="In Ref. 3; AAC23651." evidence="3" ref="3">
    <original>G</original>
    <variation>V</variation>
    <location>
        <position position="112"/>
    </location>
</feature>
<feature type="sequence conflict" description="In Ref. 3; AAC23651." evidence="3" ref="3">
    <original>P</original>
    <variation>S</variation>
    <location>
        <position position="121"/>
    </location>
</feature>
<feature type="sequence conflict" description="In Ref. 3; AAC23651." evidence="3" ref="3">
    <original>R</original>
    <variation>L</variation>
    <location>
        <position position="181"/>
    </location>
</feature>
<feature type="sequence conflict" description="In Ref. 3; AAC23651." evidence="3" ref="3">
    <original>G</original>
    <variation>E</variation>
    <location>
        <position position="214"/>
    </location>
</feature>
<feature type="sequence conflict" description="In Ref. 3; AAC23651." evidence="3" ref="3">
    <original>H</original>
    <variation>L</variation>
    <location>
        <position position="244"/>
    </location>
</feature>
<feature type="sequence conflict" description="In Ref. 3; AAC23651." evidence="3" ref="3">
    <original>E</original>
    <variation>K</variation>
    <location>
        <position position="330"/>
    </location>
</feature>
<feature type="sequence conflict" description="In Ref. 3; AAC23651." evidence="3" ref="3">
    <original>E</original>
    <variation>G</variation>
    <location>
        <position position="345"/>
    </location>
</feature>
<sequence>MATLFLYSNTFSFFFITLVSLALLILRQPSRAASCTARPVIFNFGDSNSDTGGLVAGLGYPIGFPNGRLFFRRSTGRLSDGRLLIDFLCQSLNTSLLRPYLDSLGRTRFQNGANFAIAGSPTLPKNVPFSLNIQVKQFSHFKSRSLELASSSNSLKGMFISNNGFKNALYMIDIGQNDIARSFARGNSYSQTVKLIPQIITEIKSSIKRLYDEGGRRFWIHNTGPLGCLPQKLSMVKSKDLDQHGCLVSYNSAATLFNQGLDHMCEELRTELRDATIIYIDIYAIKYSLIANSNQYGFKSPLMACCGYGGTPYNYNVKITCGHKGSNVCEEGSRFISWDGIHYTETANAIVAMKVLSMHYSKPPTPFHFFCRR</sequence>
<accession>Q9FXB6</accession>
<accession>O82076</accession>
<dbReference type="EC" id="3.1.1.-"/>
<dbReference type="EMBL" id="AC009323">
    <property type="protein sequence ID" value="AAG09098.1"/>
    <property type="molecule type" value="Genomic_DNA"/>
</dbReference>
<dbReference type="EMBL" id="CP002684">
    <property type="protein sequence ID" value="AEE33421.1"/>
    <property type="molecule type" value="Genomic_DNA"/>
</dbReference>
<dbReference type="EMBL" id="U57828">
    <property type="protein sequence ID" value="AAC23651.1"/>
    <property type="molecule type" value="mRNA"/>
</dbReference>
<dbReference type="PIR" id="D96608">
    <property type="entry name" value="D96608"/>
</dbReference>
<dbReference type="PIR" id="T52366">
    <property type="entry name" value="T52366"/>
</dbReference>
<dbReference type="RefSeq" id="NP_176059.1">
    <property type="nucleotide sequence ID" value="NM_104543.4"/>
</dbReference>
<dbReference type="SMR" id="Q9FXB6"/>
<dbReference type="FunCoup" id="Q9FXB6">
    <property type="interactions" value="104"/>
</dbReference>
<dbReference type="STRING" id="3702.Q9FXB6"/>
<dbReference type="GlyCosmos" id="Q9FXB6">
    <property type="glycosylation" value="1 site, No reported glycans"/>
</dbReference>
<dbReference type="GlyGen" id="Q9FXB6">
    <property type="glycosylation" value="1 site"/>
</dbReference>
<dbReference type="PaxDb" id="3702-AT1G56670.1"/>
<dbReference type="ProteomicsDB" id="238439"/>
<dbReference type="EnsemblPlants" id="AT1G56670.1">
    <property type="protein sequence ID" value="AT1G56670.1"/>
    <property type="gene ID" value="AT1G56670"/>
</dbReference>
<dbReference type="GeneID" id="842122"/>
<dbReference type="Gramene" id="AT1G56670.1">
    <property type="protein sequence ID" value="AT1G56670.1"/>
    <property type="gene ID" value="AT1G56670"/>
</dbReference>
<dbReference type="KEGG" id="ath:AT1G56670"/>
<dbReference type="Araport" id="AT1G56670"/>
<dbReference type="TAIR" id="AT1G56670"/>
<dbReference type="eggNOG" id="ENOG502QTD0">
    <property type="taxonomic scope" value="Eukaryota"/>
</dbReference>
<dbReference type="HOGENOM" id="CLU_015101_2_0_1"/>
<dbReference type="InParanoid" id="Q9FXB6"/>
<dbReference type="OMA" id="GCDEECK"/>
<dbReference type="PhylomeDB" id="Q9FXB6"/>
<dbReference type="BioCyc" id="ARA:AT1G56670-MONOMER"/>
<dbReference type="PRO" id="PR:Q9FXB6"/>
<dbReference type="Proteomes" id="UP000006548">
    <property type="component" value="Chromosome 1"/>
</dbReference>
<dbReference type="ExpressionAtlas" id="Q9FXB6">
    <property type="expression patterns" value="baseline and differential"/>
</dbReference>
<dbReference type="GO" id="GO:0005576">
    <property type="term" value="C:extracellular region"/>
    <property type="evidence" value="ECO:0007669"/>
    <property type="project" value="UniProtKB-SubCell"/>
</dbReference>
<dbReference type="GO" id="GO:0016788">
    <property type="term" value="F:hydrolase activity, acting on ester bonds"/>
    <property type="evidence" value="ECO:0007669"/>
    <property type="project" value="InterPro"/>
</dbReference>
<dbReference type="GO" id="GO:0016042">
    <property type="term" value="P:lipid catabolic process"/>
    <property type="evidence" value="ECO:0007669"/>
    <property type="project" value="UniProtKB-KW"/>
</dbReference>
<dbReference type="CDD" id="cd01837">
    <property type="entry name" value="SGNH_plant_lipase_like"/>
    <property type="match status" value="1"/>
</dbReference>
<dbReference type="FunFam" id="3.40.50.1110:FF:000009">
    <property type="entry name" value="GDSL esterase/lipase At1g09390"/>
    <property type="match status" value="1"/>
</dbReference>
<dbReference type="Gene3D" id="3.40.50.1110">
    <property type="entry name" value="SGNH hydrolase"/>
    <property type="match status" value="1"/>
</dbReference>
<dbReference type="InterPro" id="IPR001087">
    <property type="entry name" value="GDSL"/>
</dbReference>
<dbReference type="InterPro" id="IPR036514">
    <property type="entry name" value="SGNH_hydro_sf"/>
</dbReference>
<dbReference type="InterPro" id="IPR035669">
    <property type="entry name" value="SGNH_plant_lipase-like"/>
</dbReference>
<dbReference type="PANTHER" id="PTHR22835:SF593">
    <property type="entry name" value="GDSL ESTERASE_LIPASE LIP-4"/>
    <property type="match status" value="1"/>
</dbReference>
<dbReference type="PANTHER" id="PTHR22835">
    <property type="entry name" value="ZINC FINGER FYVE DOMAIN CONTAINING PROTEIN"/>
    <property type="match status" value="1"/>
</dbReference>
<dbReference type="Pfam" id="PF00657">
    <property type="entry name" value="Lipase_GDSL"/>
    <property type="match status" value="1"/>
</dbReference>
<reference key="1">
    <citation type="journal article" date="2000" name="Nature">
        <title>Sequence and analysis of chromosome 1 of the plant Arabidopsis thaliana.</title>
        <authorList>
            <person name="Theologis A."/>
            <person name="Ecker J.R."/>
            <person name="Palm C.J."/>
            <person name="Federspiel N.A."/>
            <person name="Kaul S."/>
            <person name="White O."/>
            <person name="Alonso J."/>
            <person name="Altafi H."/>
            <person name="Araujo R."/>
            <person name="Bowman C.L."/>
            <person name="Brooks S.Y."/>
            <person name="Buehler E."/>
            <person name="Chan A."/>
            <person name="Chao Q."/>
            <person name="Chen H."/>
            <person name="Cheuk R.F."/>
            <person name="Chin C.W."/>
            <person name="Chung M.K."/>
            <person name="Conn L."/>
            <person name="Conway A.B."/>
            <person name="Conway A.R."/>
            <person name="Creasy T.H."/>
            <person name="Dewar K."/>
            <person name="Dunn P."/>
            <person name="Etgu P."/>
            <person name="Feldblyum T.V."/>
            <person name="Feng J.-D."/>
            <person name="Fong B."/>
            <person name="Fujii C.Y."/>
            <person name="Gill J.E."/>
            <person name="Goldsmith A.D."/>
            <person name="Haas B."/>
            <person name="Hansen N.F."/>
            <person name="Hughes B."/>
            <person name="Huizar L."/>
            <person name="Hunter J.L."/>
            <person name="Jenkins J."/>
            <person name="Johnson-Hopson C."/>
            <person name="Khan S."/>
            <person name="Khaykin E."/>
            <person name="Kim C.J."/>
            <person name="Koo H.L."/>
            <person name="Kremenetskaia I."/>
            <person name="Kurtz D.B."/>
            <person name="Kwan A."/>
            <person name="Lam B."/>
            <person name="Langin-Hooper S."/>
            <person name="Lee A."/>
            <person name="Lee J.M."/>
            <person name="Lenz C.A."/>
            <person name="Li J.H."/>
            <person name="Li Y.-P."/>
            <person name="Lin X."/>
            <person name="Liu S.X."/>
            <person name="Liu Z.A."/>
            <person name="Luros J.S."/>
            <person name="Maiti R."/>
            <person name="Marziali A."/>
            <person name="Militscher J."/>
            <person name="Miranda M."/>
            <person name="Nguyen M."/>
            <person name="Nierman W.C."/>
            <person name="Osborne B.I."/>
            <person name="Pai G."/>
            <person name="Peterson J."/>
            <person name="Pham P.K."/>
            <person name="Rizzo M."/>
            <person name="Rooney T."/>
            <person name="Rowley D."/>
            <person name="Sakano H."/>
            <person name="Salzberg S.L."/>
            <person name="Schwartz J.R."/>
            <person name="Shinn P."/>
            <person name="Southwick A.M."/>
            <person name="Sun H."/>
            <person name="Tallon L.J."/>
            <person name="Tambunga G."/>
            <person name="Toriumi M.J."/>
            <person name="Town C.D."/>
            <person name="Utterback T."/>
            <person name="Van Aken S."/>
            <person name="Vaysberg M."/>
            <person name="Vysotskaia V.S."/>
            <person name="Walker M."/>
            <person name="Wu D."/>
            <person name="Yu G."/>
            <person name="Fraser C.M."/>
            <person name="Venter J.C."/>
            <person name="Davis R.W."/>
        </authorList>
    </citation>
    <scope>NUCLEOTIDE SEQUENCE [LARGE SCALE GENOMIC DNA]</scope>
    <source>
        <strain>cv. Columbia</strain>
    </source>
</reference>
<reference key="2">
    <citation type="journal article" date="2017" name="Plant J.">
        <title>Araport11: a complete reannotation of the Arabidopsis thaliana reference genome.</title>
        <authorList>
            <person name="Cheng C.Y."/>
            <person name="Krishnakumar V."/>
            <person name="Chan A.P."/>
            <person name="Thibaud-Nissen F."/>
            <person name="Schobel S."/>
            <person name="Town C.D."/>
        </authorList>
    </citation>
    <scope>GENOME REANNOTATION</scope>
    <source>
        <strain>cv. Columbia</strain>
    </source>
</reference>
<reference key="3">
    <citation type="journal article" date="1998" name="J. Biochem. Mol. Biol. Biophys.">
        <title>An Arabidopsis lipase-like gene within a sequence previously characterized as an intron.</title>
        <authorList>
            <person name="Dickstein R."/>
            <person name="Davies P."/>
            <person name="Hoogland D."/>
            <person name="Brick D."/>
            <person name="Upton C."/>
        </authorList>
    </citation>
    <scope>NUCLEOTIDE SEQUENCE [MRNA] OF 45-345</scope>
    <source>
        <strain>cv. Columbia</strain>
    </source>
</reference>
<reference key="4">
    <citation type="journal article" date="2004" name="Prog. Lipid Res.">
        <title>GDSL family of serine esterases/lipases.</title>
        <authorList>
            <person name="Akoh C.C."/>
            <person name="Lee G.-C."/>
            <person name="Liaw Y.-C."/>
            <person name="Huang T.-H."/>
            <person name="Shaw J.-F."/>
        </authorList>
    </citation>
    <scope>REVIEW</scope>
</reference>
<reference key="5">
    <citation type="journal article" date="2008" name="Pak. J. Biol. Sci.">
        <title>Sequence analysis of GDSL lipase gene family in Arabidopsis thaliana.</title>
        <authorList>
            <person name="Ling H."/>
        </authorList>
    </citation>
    <scope>GENE FAMILY</scope>
</reference>